<dbReference type="EC" id="2.8.3.21" evidence="1"/>
<dbReference type="EMBL" id="CP001396">
    <property type="protein sequence ID" value="ACR62673.1"/>
    <property type="molecule type" value="Genomic_DNA"/>
</dbReference>
<dbReference type="RefSeq" id="WP_000349936.1">
    <property type="nucleotide sequence ID" value="NC_012759.1"/>
</dbReference>
<dbReference type="SMR" id="C4ZPW4"/>
<dbReference type="KEGG" id="ebw:BWG_0036"/>
<dbReference type="HOGENOM" id="CLU_033975_2_0_6"/>
<dbReference type="UniPathway" id="UPA00117"/>
<dbReference type="GO" id="GO:0005737">
    <property type="term" value="C:cytoplasm"/>
    <property type="evidence" value="ECO:0007669"/>
    <property type="project" value="UniProtKB-SubCell"/>
</dbReference>
<dbReference type="GO" id="GO:0008735">
    <property type="term" value="F:L-carnitine CoA-transferase activity"/>
    <property type="evidence" value="ECO:0007669"/>
    <property type="project" value="RHEA"/>
</dbReference>
<dbReference type="GO" id="GO:0009437">
    <property type="term" value="P:carnitine metabolic process"/>
    <property type="evidence" value="ECO:0007669"/>
    <property type="project" value="UniProtKB-UniRule"/>
</dbReference>
<dbReference type="FunFam" id="3.30.1540.10:FF:000001">
    <property type="entry name" value="L-carnitine CoA-transferase"/>
    <property type="match status" value="1"/>
</dbReference>
<dbReference type="Gene3D" id="3.40.50.10540">
    <property type="entry name" value="Crotonobetainyl-coa:carnitine coa-transferase, domain 1"/>
    <property type="match status" value="1"/>
</dbReference>
<dbReference type="Gene3D" id="3.30.1540.10">
    <property type="entry name" value="formyl-coa transferase, domain 3"/>
    <property type="match status" value="1"/>
</dbReference>
<dbReference type="HAMAP" id="MF_01050">
    <property type="entry name" value="CaiB"/>
    <property type="match status" value="1"/>
</dbReference>
<dbReference type="InterPro" id="IPR050509">
    <property type="entry name" value="CoA-transferase_III"/>
</dbReference>
<dbReference type="InterPro" id="IPR023452">
    <property type="entry name" value="CoA-Trfase_CaiB"/>
</dbReference>
<dbReference type="InterPro" id="IPR003673">
    <property type="entry name" value="CoA-Trfase_fam_III"/>
</dbReference>
<dbReference type="InterPro" id="IPR044855">
    <property type="entry name" value="CoA-Trfase_III_dom3_sf"/>
</dbReference>
<dbReference type="InterPro" id="IPR023606">
    <property type="entry name" value="CoA-Trfase_III_dom_1_sf"/>
</dbReference>
<dbReference type="NCBIfam" id="NF002914">
    <property type="entry name" value="PRK03525.1"/>
    <property type="match status" value="1"/>
</dbReference>
<dbReference type="PANTHER" id="PTHR48228:SF6">
    <property type="entry name" value="L-CARNITINE COA-TRANSFERASE"/>
    <property type="match status" value="1"/>
</dbReference>
<dbReference type="PANTHER" id="PTHR48228">
    <property type="entry name" value="SUCCINYL-COA--D-CITRAMALATE COA-TRANSFERASE"/>
    <property type="match status" value="1"/>
</dbReference>
<dbReference type="Pfam" id="PF02515">
    <property type="entry name" value="CoA_transf_3"/>
    <property type="match status" value="1"/>
</dbReference>
<dbReference type="SUPFAM" id="SSF89796">
    <property type="entry name" value="CoA-transferase family III (CaiB/BaiF)"/>
    <property type="match status" value="1"/>
</dbReference>
<keyword id="KW-0963">Cytoplasm</keyword>
<keyword id="KW-0808">Transferase</keyword>
<accession>C4ZPW4</accession>
<comment type="function">
    <text evidence="1">Catalyzes the reversible transfer of the CoA moiety from gamma-butyrobetainyl-CoA to L-carnitine to generate L-carnitinyl-CoA and gamma-butyrobetaine. Is also able to catalyze the reversible transfer of the CoA moiety from gamma-butyrobetainyl-CoA or L-carnitinyl-CoA to crotonobetaine to generate crotonobetainyl-CoA.</text>
</comment>
<comment type="catalytic activity">
    <reaction evidence="1">
        <text>crotonobetainyl-CoA + (R)-carnitine = crotonobetaine + (R)-carnitinyl-CoA</text>
        <dbReference type="Rhea" id="RHEA:28526"/>
        <dbReference type="ChEBI" id="CHEBI:16347"/>
        <dbReference type="ChEBI" id="CHEBI:17237"/>
        <dbReference type="ChEBI" id="CHEBI:60932"/>
        <dbReference type="ChEBI" id="CHEBI:60933"/>
        <dbReference type="EC" id="2.8.3.21"/>
    </reaction>
</comment>
<comment type="catalytic activity">
    <reaction evidence="1">
        <text>4-(trimethylamino)butanoyl-CoA + (R)-carnitine = (R)-carnitinyl-CoA + 4-(trimethylamino)butanoate</text>
        <dbReference type="Rhea" id="RHEA:28418"/>
        <dbReference type="ChEBI" id="CHEBI:16244"/>
        <dbReference type="ChEBI" id="CHEBI:16347"/>
        <dbReference type="ChEBI" id="CHEBI:60932"/>
        <dbReference type="ChEBI" id="CHEBI:61513"/>
        <dbReference type="EC" id="2.8.3.21"/>
    </reaction>
</comment>
<comment type="pathway">
    <text evidence="1">Amine and polyamine metabolism; carnitine metabolism.</text>
</comment>
<comment type="subunit">
    <text evidence="1">Homodimer.</text>
</comment>
<comment type="subcellular location">
    <subcellularLocation>
        <location evidence="1">Cytoplasm</location>
    </subcellularLocation>
</comment>
<comment type="similarity">
    <text evidence="1">Belongs to the CoA-transferase III family. CaiB subfamily.</text>
</comment>
<protein>
    <recommendedName>
        <fullName evidence="1">L-carnitine CoA-transferase</fullName>
        <ecNumber evidence="1">2.8.3.21</ecNumber>
    </recommendedName>
    <alternativeName>
        <fullName evidence="1">Crotonobetainyl-CoA:carnitine CoA-transferase</fullName>
    </alternativeName>
</protein>
<proteinExistence type="inferred from homology"/>
<name>CAIB_ECOBW</name>
<sequence>MDHLPMPKFGPLAGLRVVFSGIEIAGPFAGQMFAEWGAEVIWIENVAWADTIRVQPNYPQLSRRNLHALSLNIFKDEGREAFLKLMETTDIFIEASKGPAFARRGITDEVLWQHNPKLVIAHLSGFGQYGTEEYTNLPAYNTIAQAFSGYLIQNGDVDQPMPAFPYTADYFSGLTATTAALAALHKVRETGKGESIDIAMYEVMLRMGQYFMMDYFNGGEMCPRMSKGKDPYYAGCGLYKCADGYIVMELVGITQIEECFKDIGLAHLLGTPEIPEGTQLIHRIECPYGPLVEEKLDAWLATHTIAEVKERFAELNIACAKVLTVPELESNPQYVARESITQWQTMDGRTCKGPNIMPKFKNNPGQIWRGMPSHGMDTAAILKNIGYSENDIQELVSKGLAKVED</sequence>
<feature type="chain" id="PRO_1000213430" description="L-carnitine CoA-transferase">
    <location>
        <begin position="1"/>
        <end position="405"/>
    </location>
</feature>
<feature type="active site" description="Nucleophile" evidence="1">
    <location>
        <position position="169"/>
    </location>
</feature>
<feature type="binding site" evidence="1">
    <location>
        <position position="97"/>
    </location>
    <ligand>
        <name>CoA</name>
        <dbReference type="ChEBI" id="CHEBI:57287"/>
    </ligand>
</feature>
<feature type="binding site" evidence="1">
    <location>
        <position position="104"/>
    </location>
    <ligand>
        <name>CoA</name>
        <dbReference type="ChEBI" id="CHEBI:57287"/>
    </ligand>
</feature>
<evidence type="ECO:0000255" key="1">
    <source>
        <dbReference type="HAMAP-Rule" id="MF_01050"/>
    </source>
</evidence>
<gene>
    <name evidence="1" type="primary">caiB</name>
    <name type="ordered locus">BWG_0036</name>
</gene>
<reference key="1">
    <citation type="journal article" date="2009" name="J. Bacteriol.">
        <title>Genomic sequencing reveals regulatory mutations and recombinational events in the widely used MC4100 lineage of Escherichia coli K-12.</title>
        <authorList>
            <person name="Ferenci T."/>
            <person name="Zhou Z."/>
            <person name="Betteridge T."/>
            <person name="Ren Y."/>
            <person name="Liu Y."/>
            <person name="Feng L."/>
            <person name="Reeves P.R."/>
            <person name="Wang L."/>
        </authorList>
    </citation>
    <scope>NUCLEOTIDE SEQUENCE [LARGE SCALE GENOMIC DNA]</scope>
    <source>
        <strain>K12 / MC4100 / BW2952</strain>
    </source>
</reference>
<organism>
    <name type="scientific">Escherichia coli (strain K12 / MC4100 / BW2952)</name>
    <dbReference type="NCBI Taxonomy" id="595496"/>
    <lineage>
        <taxon>Bacteria</taxon>
        <taxon>Pseudomonadati</taxon>
        <taxon>Pseudomonadota</taxon>
        <taxon>Gammaproteobacteria</taxon>
        <taxon>Enterobacterales</taxon>
        <taxon>Enterobacteriaceae</taxon>
        <taxon>Escherichia</taxon>
    </lineage>
</organism>